<dbReference type="EMBL" id="CP000107">
    <property type="protein sequence ID" value="AAZ68647.1"/>
    <property type="molecule type" value="Genomic_DNA"/>
</dbReference>
<dbReference type="RefSeq" id="WP_011304725.1">
    <property type="nucleotide sequence ID" value="NC_007354.1"/>
</dbReference>
<dbReference type="SMR" id="Q3YRK8"/>
<dbReference type="FunCoup" id="Q3YRK8">
    <property type="interactions" value="342"/>
</dbReference>
<dbReference type="STRING" id="269484.Ecaj_0613"/>
<dbReference type="KEGG" id="ecn:Ecaj_0613"/>
<dbReference type="eggNOG" id="COG0051">
    <property type="taxonomic scope" value="Bacteria"/>
</dbReference>
<dbReference type="HOGENOM" id="CLU_122625_1_3_5"/>
<dbReference type="InParanoid" id="Q3YRK8"/>
<dbReference type="Proteomes" id="UP000000435">
    <property type="component" value="Chromosome"/>
</dbReference>
<dbReference type="GO" id="GO:1990904">
    <property type="term" value="C:ribonucleoprotein complex"/>
    <property type="evidence" value="ECO:0007669"/>
    <property type="project" value="UniProtKB-KW"/>
</dbReference>
<dbReference type="GO" id="GO:0005840">
    <property type="term" value="C:ribosome"/>
    <property type="evidence" value="ECO:0007669"/>
    <property type="project" value="UniProtKB-KW"/>
</dbReference>
<dbReference type="GO" id="GO:0003735">
    <property type="term" value="F:structural constituent of ribosome"/>
    <property type="evidence" value="ECO:0007669"/>
    <property type="project" value="InterPro"/>
</dbReference>
<dbReference type="GO" id="GO:0000049">
    <property type="term" value="F:tRNA binding"/>
    <property type="evidence" value="ECO:0007669"/>
    <property type="project" value="UniProtKB-UniRule"/>
</dbReference>
<dbReference type="GO" id="GO:0006412">
    <property type="term" value="P:translation"/>
    <property type="evidence" value="ECO:0007669"/>
    <property type="project" value="UniProtKB-UniRule"/>
</dbReference>
<dbReference type="FunFam" id="3.30.70.600:FF:000003">
    <property type="entry name" value="30S ribosomal protein S10"/>
    <property type="match status" value="1"/>
</dbReference>
<dbReference type="Gene3D" id="3.30.70.600">
    <property type="entry name" value="Ribosomal protein S10 domain"/>
    <property type="match status" value="1"/>
</dbReference>
<dbReference type="HAMAP" id="MF_00508">
    <property type="entry name" value="Ribosomal_uS10"/>
    <property type="match status" value="1"/>
</dbReference>
<dbReference type="InterPro" id="IPR001848">
    <property type="entry name" value="Ribosomal_uS10"/>
</dbReference>
<dbReference type="InterPro" id="IPR027486">
    <property type="entry name" value="Ribosomal_uS10_dom"/>
</dbReference>
<dbReference type="InterPro" id="IPR036838">
    <property type="entry name" value="Ribosomal_uS10_dom_sf"/>
</dbReference>
<dbReference type="NCBIfam" id="NF001861">
    <property type="entry name" value="PRK00596.1"/>
    <property type="match status" value="1"/>
</dbReference>
<dbReference type="NCBIfam" id="TIGR01049">
    <property type="entry name" value="rpsJ_bact"/>
    <property type="match status" value="1"/>
</dbReference>
<dbReference type="PANTHER" id="PTHR11700">
    <property type="entry name" value="30S RIBOSOMAL PROTEIN S10 FAMILY MEMBER"/>
    <property type="match status" value="1"/>
</dbReference>
<dbReference type="Pfam" id="PF00338">
    <property type="entry name" value="Ribosomal_S10"/>
    <property type="match status" value="1"/>
</dbReference>
<dbReference type="PRINTS" id="PR00971">
    <property type="entry name" value="RIBOSOMALS10"/>
</dbReference>
<dbReference type="SMART" id="SM01403">
    <property type="entry name" value="Ribosomal_S10"/>
    <property type="match status" value="1"/>
</dbReference>
<dbReference type="SUPFAM" id="SSF54999">
    <property type="entry name" value="Ribosomal protein S10"/>
    <property type="match status" value="1"/>
</dbReference>
<accession>Q3YRK8</accession>
<gene>
    <name evidence="1" type="primary">rpsJ</name>
    <name type="ordered locus">Ecaj_0613</name>
</gene>
<name>RS10_EHRCJ</name>
<evidence type="ECO:0000255" key="1">
    <source>
        <dbReference type="HAMAP-Rule" id="MF_00508"/>
    </source>
</evidence>
<evidence type="ECO:0000305" key="2"/>
<organism>
    <name type="scientific">Ehrlichia canis (strain Jake)</name>
    <dbReference type="NCBI Taxonomy" id="269484"/>
    <lineage>
        <taxon>Bacteria</taxon>
        <taxon>Pseudomonadati</taxon>
        <taxon>Pseudomonadota</taxon>
        <taxon>Alphaproteobacteria</taxon>
        <taxon>Rickettsiales</taxon>
        <taxon>Anaplasmataceae</taxon>
        <taxon>Ehrlichia</taxon>
    </lineage>
</organism>
<reference key="1">
    <citation type="journal article" date="2006" name="J. Bacteriol.">
        <title>The genome of the obligately intracellular bacterium Ehrlichia canis reveals themes of complex membrane structure and immune evasion strategies.</title>
        <authorList>
            <person name="Mavromatis K."/>
            <person name="Doyle C.K."/>
            <person name="Lykidis A."/>
            <person name="Ivanova N."/>
            <person name="Francino M.P."/>
            <person name="Chain P."/>
            <person name="Shin M."/>
            <person name="Malfatti S."/>
            <person name="Larimer F."/>
            <person name="Copeland A."/>
            <person name="Detter J.C."/>
            <person name="Land M."/>
            <person name="Richardson P.M."/>
            <person name="Yu X.J."/>
            <person name="Walker D.H."/>
            <person name="McBride J.W."/>
            <person name="Kyrpides N.C."/>
        </authorList>
    </citation>
    <scope>NUCLEOTIDE SEQUENCE [LARGE SCALE GENOMIC DNA]</scope>
    <source>
        <strain>Jake</strain>
    </source>
</reference>
<feature type="chain" id="PRO_0000237040" description="Small ribosomal subunit protein uS10">
    <location>
        <begin position="1"/>
        <end position="108"/>
    </location>
</feature>
<comment type="function">
    <text evidence="1">Involved in the binding of tRNA to the ribosomes.</text>
</comment>
<comment type="subunit">
    <text evidence="1">Part of the 30S ribosomal subunit.</text>
</comment>
<comment type="similarity">
    <text evidence="1">Belongs to the universal ribosomal protein uS10 family.</text>
</comment>
<keyword id="KW-0687">Ribonucleoprotein</keyword>
<keyword id="KW-0689">Ribosomal protein</keyword>
<proteinExistence type="inferred from homology"/>
<protein>
    <recommendedName>
        <fullName evidence="1">Small ribosomal subunit protein uS10</fullName>
    </recommendedName>
    <alternativeName>
        <fullName evidence="2">30S ribosomal protein S10</fullName>
    </alternativeName>
</protein>
<sequence>MVTQKIYIELKAFDSCLLDRSARSIILTAKRSGARVNGPIFFPRKVMKFIVNRSTHVDKKSREQFEIRTHKRLISLPRANSTIIQALMSLQLPAGVDVKVKVIGGNNG</sequence>